<evidence type="ECO:0000250" key="1"/>
<evidence type="ECO:0000305" key="2"/>
<reference key="1">
    <citation type="journal article" date="2002" name="Proc. Natl. Acad. Sci. U.S.A.">
        <title>The genome sequence of the facultative intracellular pathogen Brucella melitensis.</title>
        <authorList>
            <person name="DelVecchio V.G."/>
            <person name="Kapatral V."/>
            <person name="Redkar R.J."/>
            <person name="Patra G."/>
            <person name="Mujer C."/>
            <person name="Los T."/>
            <person name="Ivanova N."/>
            <person name="Anderson I."/>
            <person name="Bhattacharyya A."/>
            <person name="Lykidis A."/>
            <person name="Reznik G."/>
            <person name="Jablonski L."/>
            <person name="Larsen N."/>
            <person name="D'Souza M."/>
            <person name="Bernal A."/>
            <person name="Mazur M."/>
            <person name="Goltsman E."/>
            <person name="Selkov E."/>
            <person name="Elzer P.H."/>
            <person name="Hagius S."/>
            <person name="O'Callaghan D."/>
            <person name="Letesson J.-J."/>
            <person name="Haselkorn R."/>
            <person name="Kyrpides N.C."/>
            <person name="Overbeek R."/>
        </authorList>
    </citation>
    <scope>NUCLEOTIDE SEQUENCE [LARGE SCALE GENOMIC DNA]</scope>
    <source>
        <strain>ATCC 23456 / CCUG 17765 / NCTC 10094 / 16M</strain>
    </source>
</reference>
<organism>
    <name type="scientific">Brucella melitensis biotype 1 (strain ATCC 23456 / CCUG 17765 / NCTC 10094 / 16M)</name>
    <dbReference type="NCBI Taxonomy" id="224914"/>
    <lineage>
        <taxon>Bacteria</taxon>
        <taxon>Pseudomonadati</taxon>
        <taxon>Pseudomonadota</taxon>
        <taxon>Alphaproteobacteria</taxon>
        <taxon>Hyphomicrobiales</taxon>
        <taxon>Brucellaceae</taxon>
        <taxon>Brucella/Ochrobactrum group</taxon>
        <taxon>Brucella</taxon>
    </lineage>
</organism>
<name>FABZ_BRUME</name>
<proteinExistence type="inferred from homology"/>
<comment type="function">
    <text evidence="1">Involved in unsaturated fatty acids biosynthesis. Catalyzes the dehydration of short chain beta-hydroxyacyl-ACPs and long chain saturated and unsaturated beta-hydroxyacyl-ACPs (By similarity).</text>
</comment>
<comment type="catalytic activity">
    <reaction>
        <text>a (3R)-hydroxyacyl-[ACP] = a (2E)-enoyl-[ACP] + H2O</text>
        <dbReference type="Rhea" id="RHEA:13097"/>
        <dbReference type="Rhea" id="RHEA-COMP:9925"/>
        <dbReference type="Rhea" id="RHEA-COMP:9945"/>
        <dbReference type="ChEBI" id="CHEBI:15377"/>
        <dbReference type="ChEBI" id="CHEBI:78784"/>
        <dbReference type="ChEBI" id="CHEBI:78827"/>
        <dbReference type="EC" id="4.2.1.59"/>
    </reaction>
</comment>
<comment type="subcellular location">
    <subcellularLocation>
        <location evidence="1">Cytoplasm</location>
    </subcellularLocation>
</comment>
<comment type="similarity">
    <text evidence="2">Belongs to the thioester dehydratase family. FabZ subfamily.</text>
</comment>
<comment type="sequence caution" evidence="2">
    <conflict type="erroneous initiation">
        <sequence resource="EMBL-CDS" id="AAL52013"/>
    </conflict>
</comment>
<feature type="chain" id="PRO_0000091651" description="3-hydroxyacyl-[acyl-carrier-protein] dehydratase FabZ">
    <location>
        <begin position="1"/>
        <end position="157"/>
    </location>
</feature>
<feature type="active site" evidence="1">
    <location>
        <position position="58"/>
    </location>
</feature>
<keyword id="KW-0963">Cytoplasm</keyword>
<keyword id="KW-0441">Lipid A biosynthesis</keyword>
<keyword id="KW-0444">Lipid biosynthesis</keyword>
<keyword id="KW-0443">Lipid metabolism</keyword>
<keyword id="KW-0456">Lyase</keyword>
<protein>
    <recommendedName>
        <fullName>3-hydroxyacyl-[acyl-carrier-protein] dehydratase FabZ</fullName>
        <ecNumber>4.2.1.59</ecNumber>
    </recommendedName>
    <alternativeName>
        <fullName>(3R)-hydroxymyristoyl-[acyl-carrier-protein] dehydratase</fullName>
        <shortName>(3R)-hydroxymyristoyl-ACP dehydrase</shortName>
    </alternativeName>
    <alternativeName>
        <fullName>Beta-hydroxyacyl-ACP dehydratase</fullName>
    </alternativeName>
</protein>
<gene>
    <name type="primary">fabZ</name>
    <name type="ordered locus">BMEI0832</name>
</gene>
<dbReference type="EC" id="4.2.1.59"/>
<dbReference type="EMBL" id="AE008917">
    <property type="protein sequence ID" value="AAL52013.1"/>
    <property type="status" value="ALT_INIT"/>
    <property type="molecule type" value="Genomic_DNA"/>
</dbReference>
<dbReference type="PIR" id="AB3356">
    <property type="entry name" value="AB3356"/>
</dbReference>
<dbReference type="RefSeq" id="WP_004683864.1">
    <property type="nucleotide sequence ID" value="NZ_GG703780.1"/>
</dbReference>
<dbReference type="SMR" id="Q8YHG9"/>
<dbReference type="GeneID" id="29593646"/>
<dbReference type="KEGG" id="bme:BMEI0832"/>
<dbReference type="KEGG" id="bmel:DK63_588"/>
<dbReference type="PATRIC" id="fig|224914.52.peg.613"/>
<dbReference type="eggNOG" id="COG0764">
    <property type="taxonomic scope" value="Bacteria"/>
</dbReference>
<dbReference type="Proteomes" id="UP000000419">
    <property type="component" value="Chromosome I"/>
</dbReference>
<dbReference type="GO" id="GO:0005737">
    <property type="term" value="C:cytoplasm"/>
    <property type="evidence" value="ECO:0007669"/>
    <property type="project" value="UniProtKB-SubCell"/>
</dbReference>
<dbReference type="GO" id="GO:0016020">
    <property type="term" value="C:membrane"/>
    <property type="evidence" value="ECO:0007669"/>
    <property type="project" value="GOC"/>
</dbReference>
<dbReference type="GO" id="GO:0019171">
    <property type="term" value="F:(3R)-hydroxyacyl-[acyl-carrier-protein] dehydratase activity"/>
    <property type="evidence" value="ECO:0007669"/>
    <property type="project" value="UniProtKB-EC"/>
</dbReference>
<dbReference type="GO" id="GO:0006633">
    <property type="term" value="P:fatty acid biosynthetic process"/>
    <property type="evidence" value="ECO:0007669"/>
    <property type="project" value="UniProtKB-UniRule"/>
</dbReference>
<dbReference type="GO" id="GO:0009245">
    <property type="term" value="P:lipid A biosynthetic process"/>
    <property type="evidence" value="ECO:0007669"/>
    <property type="project" value="UniProtKB-UniRule"/>
</dbReference>
<dbReference type="CDD" id="cd01288">
    <property type="entry name" value="FabZ"/>
    <property type="match status" value="1"/>
</dbReference>
<dbReference type="FunFam" id="3.10.129.10:FF:000001">
    <property type="entry name" value="3-hydroxyacyl-[acyl-carrier-protein] dehydratase FabZ"/>
    <property type="match status" value="1"/>
</dbReference>
<dbReference type="Gene3D" id="3.10.129.10">
    <property type="entry name" value="Hotdog Thioesterase"/>
    <property type="match status" value="1"/>
</dbReference>
<dbReference type="HAMAP" id="MF_00406">
    <property type="entry name" value="FabZ"/>
    <property type="match status" value="1"/>
</dbReference>
<dbReference type="InterPro" id="IPR013114">
    <property type="entry name" value="FabA_FabZ"/>
</dbReference>
<dbReference type="InterPro" id="IPR010084">
    <property type="entry name" value="FabZ"/>
</dbReference>
<dbReference type="InterPro" id="IPR029069">
    <property type="entry name" value="HotDog_dom_sf"/>
</dbReference>
<dbReference type="NCBIfam" id="TIGR01750">
    <property type="entry name" value="fabZ"/>
    <property type="match status" value="1"/>
</dbReference>
<dbReference type="NCBIfam" id="NF000582">
    <property type="entry name" value="PRK00006.1"/>
    <property type="match status" value="1"/>
</dbReference>
<dbReference type="PANTHER" id="PTHR30272">
    <property type="entry name" value="3-HYDROXYACYL-[ACYL-CARRIER-PROTEIN] DEHYDRATASE"/>
    <property type="match status" value="1"/>
</dbReference>
<dbReference type="PANTHER" id="PTHR30272:SF1">
    <property type="entry name" value="3-HYDROXYACYL-[ACYL-CARRIER-PROTEIN] DEHYDRATASE"/>
    <property type="match status" value="1"/>
</dbReference>
<dbReference type="Pfam" id="PF07977">
    <property type="entry name" value="FabA"/>
    <property type="match status" value="1"/>
</dbReference>
<dbReference type="SUPFAM" id="SSF54637">
    <property type="entry name" value="Thioesterase/thiol ester dehydrase-isomerase"/>
    <property type="match status" value="1"/>
</dbReference>
<accession>Q8YHG9</accession>
<sequence>MSDDNQTKLEAADIQALLAVLPHRYPFLLIDRIVDIDGDVSATGIKNVTINEPHFTGHFPENPIMPGVLIVEAMAQTAGAISLLQRKTGRPGVVYFMTIDSAKFRRPVVPGDRLLLYVKKIKQRANISKYECVAEVDGVKVAEAEVAAMISVADENL</sequence>